<evidence type="ECO:0000250" key="1"/>
<evidence type="ECO:0000255" key="2">
    <source>
        <dbReference type="HAMAP-Rule" id="MF_00054"/>
    </source>
</evidence>
<reference key="1">
    <citation type="journal article" date="2005" name="Nucleic Acids Res.">
        <title>Genome dynamics and diversity of Shigella species, the etiologic agents of bacillary dysentery.</title>
        <authorList>
            <person name="Yang F."/>
            <person name="Yang J."/>
            <person name="Zhang X."/>
            <person name="Chen L."/>
            <person name="Jiang Y."/>
            <person name="Yan Y."/>
            <person name="Tang X."/>
            <person name="Wang J."/>
            <person name="Xiong Z."/>
            <person name="Dong J."/>
            <person name="Xue Y."/>
            <person name="Zhu Y."/>
            <person name="Xu X."/>
            <person name="Sun L."/>
            <person name="Chen S."/>
            <person name="Nie H."/>
            <person name="Peng J."/>
            <person name="Xu J."/>
            <person name="Wang Y."/>
            <person name="Yuan Z."/>
            <person name="Wen Y."/>
            <person name="Yao Z."/>
            <person name="Shen Y."/>
            <person name="Qiang B."/>
            <person name="Hou Y."/>
            <person name="Yu J."/>
            <person name="Jin Q."/>
        </authorList>
    </citation>
    <scope>NUCLEOTIDE SEQUENCE [LARGE SCALE GENOMIC DNA]</scope>
    <source>
        <strain>Ss046</strain>
    </source>
</reference>
<dbReference type="EMBL" id="CP000038">
    <property type="protein sequence ID" value="AAZ90030.1"/>
    <property type="molecule type" value="Genomic_DNA"/>
</dbReference>
<dbReference type="RefSeq" id="WP_000124700.1">
    <property type="nucleotide sequence ID" value="NC_007384.1"/>
</dbReference>
<dbReference type="SMR" id="Q3YWT2"/>
<dbReference type="GeneID" id="93778658"/>
<dbReference type="KEGG" id="ssn:SSON_3470"/>
<dbReference type="HOGENOM" id="CLU_002794_4_1_6"/>
<dbReference type="Proteomes" id="UP000002529">
    <property type="component" value="Chromosome"/>
</dbReference>
<dbReference type="GO" id="GO:0005737">
    <property type="term" value="C:cytoplasm"/>
    <property type="evidence" value="ECO:0007669"/>
    <property type="project" value="UniProtKB-SubCell"/>
</dbReference>
<dbReference type="GO" id="GO:0005525">
    <property type="term" value="F:GTP binding"/>
    <property type="evidence" value="ECO:0007669"/>
    <property type="project" value="UniProtKB-UniRule"/>
</dbReference>
<dbReference type="GO" id="GO:0003924">
    <property type="term" value="F:GTPase activity"/>
    <property type="evidence" value="ECO:0007669"/>
    <property type="project" value="InterPro"/>
</dbReference>
<dbReference type="GO" id="GO:0097216">
    <property type="term" value="F:guanosine tetraphosphate binding"/>
    <property type="evidence" value="ECO:0007669"/>
    <property type="project" value="UniProtKB-ARBA"/>
</dbReference>
<dbReference type="GO" id="GO:0003746">
    <property type="term" value="F:translation elongation factor activity"/>
    <property type="evidence" value="ECO:0007669"/>
    <property type="project" value="UniProtKB-UniRule"/>
</dbReference>
<dbReference type="GO" id="GO:0032790">
    <property type="term" value="P:ribosome disassembly"/>
    <property type="evidence" value="ECO:0007669"/>
    <property type="project" value="TreeGrafter"/>
</dbReference>
<dbReference type="CDD" id="cd01886">
    <property type="entry name" value="EF-G"/>
    <property type="match status" value="1"/>
</dbReference>
<dbReference type="CDD" id="cd16262">
    <property type="entry name" value="EFG_III"/>
    <property type="match status" value="1"/>
</dbReference>
<dbReference type="CDD" id="cd01434">
    <property type="entry name" value="EFG_mtEFG1_IV"/>
    <property type="match status" value="1"/>
</dbReference>
<dbReference type="CDD" id="cd03713">
    <property type="entry name" value="EFG_mtEFG_C"/>
    <property type="match status" value="1"/>
</dbReference>
<dbReference type="CDD" id="cd04088">
    <property type="entry name" value="EFG_mtEFG_II"/>
    <property type="match status" value="1"/>
</dbReference>
<dbReference type="FunFam" id="2.40.30.10:FF:000006">
    <property type="entry name" value="Elongation factor G"/>
    <property type="match status" value="1"/>
</dbReference>
<dbReference type="FunFam" id="3.30.230.10:FF:000003">
    <property type="entry name" value="Elongation factor G"/>
    <property type="match status" value="1"/>
</dbReference>
<dbReference type="FunFam" id="3.30.70.240:FF:000001">
    <property type="entry name" value="Elongation factor G"/>
    <property type="match status" value="1"/>
</dbReference>
<dbReference type="FunFam" id="3.30.70.870:FF:000001">
    <property type="entry name" value="Elongation factor G"/>
    <property type="match status" value="1"/>
</dbReference>
<dbReference type="FunFam" id="3.40.50.300:FF:000029">
    <property type="entry name" value="Elongation factor G"/>
    <property type="match status" value="1"/>
</dbReference>
<dbReference type="Gene3D" id="3.30.230.10">
    <property type="match status" value="1"/>
</dbReference>
<dbReference type="Gene3D" id="3.30.70.240">
    <property type="match status" value="1"/>
</dbReference>
<dbReference type="Gene3D" id="3.30.70.870">
    <property type="entry name" value="Elongation Factor G (Translational Gtpase), domain 3"/>
    <property type="match status" value="1"/>
</dbReference>
<dbReference type="Gene3D" id="3.40.50.300">
    <property type="entry name" value="P-loop containing nucleotide triphosphate hydrolases"/>
    <property type="match status" value="1"/>
</dbReference>
<dbReference type="Gene3D" id="2.40.30.10">
    <property type="entry name" value="Translation factors"/>
    <property type="match status" value="1"/>
</dbReference>
<dbReference type="HAMAP" id="MF_00054_B">
    <property type="entry name" value="EF_G_EF_2_B"/>
    <property type="match status" value="1"/>
</dbReference>
<dbReference type="InterPro" id="IPR041095">
    <property type="entry name" value="EFG_II"/>
</dbReference>
<dbReference type="InterPro" id="IPR009022">
    <property type="entry name" value="EFG_III"/>
</dbReference>
<dbReference type="InterPro" id="IPR035647">
    <property type="entry name" value="EFG_III/V"/>
</dbReference>
<dbReference type="InterPro" id="IPR047872">
    <property type="entry name" value="EFG_IV"/>
</dbReference>
<dbReference type="InterPro" id="IPR035649">
    <property type="entry name" value="EFG_V"/>
</dbReference>
<dbReference type="InterPro" id="IPR000640">
    <property type="entry name" value="EFG_V-like"/>
</dbReference>
<dbReference type="InterPro" id="IPR004161">
    <property type="entry name" value="EFTu-like_2"/>
</dbReference>
<dbReference type="InterPro" id="IPR031157">
    <property type="entry name" value="G_TR_CS"/>
</dbReference>
<dbReference type="InterPro" id="IPR027417">
    <property type="entry name" value="P-loop_NTPase"/>
</dbReference>
<dbReference type="InterPro" id="IPR020568">
    <property type="entry name" value="Ribosomal_Su5_D2-typ_SF"/>
</dbReference>
<dbReference type="InterPro" id="IPR014721">
    <property type="entry name" value="Ribsml_uS5_D2-typ_fold_subgr"/>
</dbReference>
<dbReference type="InterPro" id="IPR005225">
    <property type="entry name" value="Small_GTP-bd"/>
</dbReference>
<dbReference type="InterPro" id="IPR000795">
    <property type="entry name" value="T_Tr_GTP-bd_dom"/>
</dbReference>
<dbReference type="InterPro" id="IPR009000">
    <property type="entry name" value="Transl_B-barrel_sf"/>
</dbReference>
<dbReference type="InterPro" id="IPR004540">
    <property type="entry name" value="Transl_elong_EFG/EF2"/>
</dbReference>
<dbReference type="InterPro" id="IPR005517">
    <property type="entry name" value="Transl_elong_EFG/EF2_IV"/>
</dbReference>
<dbReference type="NCBIfam" id="TIGR00484">
    <property type="entry name" value="EF-G"/>
    <property type="match status" value="1"/>
</dbReference>
<dbReference type="NCBIfam" id="NF009381">
    <property type="entry name" value="PRK12740.1-5"/>
    <property type="match status" value="1"/>
</dbReference>
<dbReference type="NCBIfam" id="TIGR00231">
    <property type="entry name" value="small_GTP"/>
    <property type="match status" value="1"/>
</dbReference>
<dbReference type="PANTHER" id="PTHR43261:SF1">
    <property type="entry name" value="RIBOSOME-RELEASING FACTOR 2, MITOCHONDRIAL"/>
    <property type="match status" value="1"/>
</dbReference>
<dbReference type="PANTHER" id="PTHR43261">
    <property type="entry name" value="TRANSLATION ELONGATION FACTOR G-RELATED"/>
    <property type="match status" value="1"/>
</dbReference>
<dbReference type="Pfam" id="PF00679">
    <property type="entry name" value="EFG_C"/>
    <property type="match status" value="1"/>
</dbReference>
<dbReference type="Pfam" id="PF14492">
    <property type="entry name" value="EFG_III"/>
    <property type="match status" value="1"/>
</dbReference>
<dbReference type="Pfam" id="PF03764">
    <property type="entry name" value="EFG_IV"/>
    <property type="match status" value="1"/>
</dbReference>
<dbReference type="Pfam" id="PF00009">
    <property type="entry name" value="GTP_EFTU"/>
    <property type="match status" value="1"/>
</dbReference>
<dbReference type="Pfam" id="PF03144">
    <property type="entry name" value="GTP_EFTU_D2"/>
    <property type="match status" value="1"/>
</dbReference>
<dbReference type="PRINTS" id="PR00315">
    <property type="entry name" value="ELONGATNFCT"/>
</dbReference>
<dbReference type="SMART" id="SM00838">
    <property type="entry name" value="EFG_C"/>
    <property type="match status" value="1"/>
</dbReference>
<dbReference type="SMART" id="SM00889">
    <property type="entry name" value="EFG_IV"/>
    <property type="match status" value="1"/>
</dbReference>
<dbReference type="SUPFAM" id="SSF54980">
    <property type="entry name" value="EF-G C-terminal domain-like"/>
    <property type="match status" value="2"/>
</dbReference>
<dbReference type="SUPFAM" id="SSF52540">
    <property type="entry name" value="P-loop containing nucleoside triphosphate hydrolases"/>
    <property type="match status" value="1"/>
</dbReference>
<dbReference type="SUPFAM" id="SSF54211">
    <property type="entry name" value="Ribosomal protein S5 domain 2-like"/>
    <property type="match status" value="1"/>
</dbReference>
<dbReference type="SUPFAM" id="SSF50447">
    <property type="entry name" value="Translation proteins"/>
    <property type="match status" value="1"/>
</dbReference>
<dbReference type="PROSITE" id="PS00301">
    <property type="entry name" value="G_TR_1"/>
    <property type="match status" value="1"/>
</dbReference>
<dbReference type="PROSITE" id="PS51722">
    <property type="entry name" value="G_TR_2"/>
    <property type="match status" value="1"/>
</dbReference>
<comment type="function">
    <text evidence="2">Catalyzes the GTP-dependent ribosomal translocation step during translation elongation. During this step, the ribosome changes from the pre-translocational (PRE) to the post-translocational (POST) state as the newly formed A-site-bound peptidyl-tRNA and P-site-bound deacylated tRNA move to the P and E sites, respectively. Catalyzes the coordinated movement of the two tRNA molecules, the mRNA and conformational changes in the ribosome.</text>
</comment>
<comment type="subcellular location">
    <subcellularLocation>
        <location evidence="2">Cytoplasm</location>
    </subcellularLocation>
</comment>
<comment type="similarity">
    <text evidence="2">Belongs to the TRAFAC class translation factor GTPase superfamily. Classic translation factor GTPase family. EF-G/EF-2 subfamily.</text>
</comment>
<name>EFG_SHISS</name>
<keyword id="KW-0007">Acetylation</keyword>
<keyword id="KW-0963">Cytoplasm</keyword>
<keyword id="KW-0251">Elongation factor</keyword>
<keyword id="KW-0342">GTP-binding</keyword>
<keyword id="KW-0547">Nucleotide-binding</keyword>
<keyword id="KW-0648">Protein biosynthesis</keyword>
<keyword id="KW-1185">Reference proteome</keyword>
<protein>
    <recommendedName>
        <fullName evidence="2">Elongation factor G</fullName>
        <shortName evidence="2">EF-G</shortName>
    </recommendedName>
</protein>
<feature type="chain" id="PRO_0000225240" description="Elongation factor G">
    <location>
        <begin position="1"/>
        <end position="704"/>
    </location>
</feature>
<feature type="domain" description="tr-type G">
    <location>
        <begin position="8"/>
        <end position="290"/>
    </location>
</feature>
<feature type="binding site" evidence="2">
    <location>
        <begin position="17"/>
        <end position="24"/>
    </location>
    <ligand>
        <name>GTP</name>
        <dbReference type="ChEBI" id="CHEBI:37565"/>
    </ligand>
</feature>
<feature type="binding site" evidence="2">
    <location>
        <begin position="88"/>
        <end position="92"/>
    </location>
    <ligand>
        <name>GTP</name>
        <dbReference type="ChEBI" id="CHEBI:37565"/>
    </ligand>
</feature>
<feature type="binding site" evidence="2">
    <location>
        <begin position="142"/>
        <end position="145"/>
    </location>
    <ligand>
        <name>GTP</name>
        <dbReference type="ChEBI" id="CHEBI:37565"/>
    </ligand>
</feature>
<feature type="modified residue" description="N6-acetyllysine" evidence="1">
    <location>
        <position position="504"/>
    </location>
</feature>
<feature type="modified residue" description="N6-acetyllysine" evidence="1">
    <location>
        <position position="643"/>
    </location>
</feature>
<accession>Q3YWT2</accession>
<proteinExistence type="inferred from homology"/>
<sequence length="704" mass="77581">MARTTPIARYRNIGISAHIDAGKTTTTERILFYTGVNHKIGEVHDGAATMDWMEQEQERGITITSAATTAFWSGMAKQYEPHRINIIDTPGHVDFTIEVERSMRVLDGAVMVYCAVGGVQPQSETVWRQANKYKVPRIAFVNKMDRMGANFLKVVNQIKTRLGANPVPLQLAIGAEEHFTGVVDLVKMKAINWNDADQGVTFEYEDIPADMVELANEWHQNLIESAAEASEELMEKYLGGEELTEAEIKGALRQRVLNNEIILVTCGSAFKNKGVQAMLDAVIDYLPSPVDVPAINGILDDGKDTPAERHASDDEPFSALAFKIATDPFVGNLTFFRVYSGVVNSGDTVLNSVKAARERFGRIVQMHANKREEIKEVRAGDIAAAIGLKDVTTGDTLCDPDAPIILERMEFPEPVISIAVEPKTKADQEKMGLALGRLAKEDPSFRVWTDEESNQTIIAGMGELHLDIIVDRMKREFNVEANVGKPQVAYRETIRQKVTDVEGKHAKQSGGRGQYGHVVIDMYPLEPGSNPKGYEFINDIKGGVIPGEYIPAVDKGIQEQLKAGPLAGYPVVDMGIRLHFGSYHDVDSSELAFKLAASIAFKEGFKKAKPVLLEPIMKVEVETPEENTGDVIGDLSRRRGMLKGQESEVTGVKIHAEVPLSEMFGYATQLRSLTKGRASYTMEFLKYDEAPSNVAQAVIEARGK</sequence>
<organism>
    <name type="scientific">Shigella sonnei (strain Ss046)</name>
    <dbReference type="NCBI Taxonomy" id="300269"/>
    <lineage>
        <taxon>Bacteria</taxon>
        <taxon>Pseudomonadati</taxon>
        <taxon>Pseudomonadota</taxon>
        <taxon>Gammaproteobacteria</taxon>
        <taxon>Enterobacterales</taxon>
        <taxon>Enterobacteriaceae</taxon>
        <taxon>Shigella</taxon>
    </lineage>
</organism>
<gene>
    <name evidence="2" type="primary">fusA</name>
    <name type="ordered locus">SSON_3470</name>
</gene>